<feature type="chain" id="PRO_1000118306" description="Heat-inducible transcription repressor HrcA">
    <location>
        <begin position="1"/>
        <end position="342"/>
    </location>
</feature>
<protein>
    <recommendedName>
        <fullName evidence="1">Heat-inducible transcription repressor HrcA</fullName>
    </recommendedName>
</protein>
<keyword id="KW-1185">Reference proteome</keyword>
<keyword id="KW-0678">Repressor</keyword>
<keyword id="KW-0346">Stress response</keyword>
<keyword id="KW-0804">Transcription</keyword>
<keyword id="KW-0805">Transcription regulation</keyword>
<comment type="function">
    <text evidence="1">Negative regulator of class I heat shock genes (grpE-dnaK-dnaJ and groELS operons). Prevents heat-shock induction of these operons.</text>
</comment>
<comment type="similarity">
    <text evidence="1">Belongs to the HrcA family.</text>
</comment>
<evidence type="ECO:0000255" key="1">
    <source>
        <dbReference type="HAMAP-Rule" id="MF_00081"/>
    </source>
</evidence>
<accession>A2SL47</accession>
<gene>
    <name evidence="1" type="primary">hrcA</name>
    <name type="ordered locus">Mpe_A3333</name>
</gene>
<sequence>MLDERAKTLLKTLVERYIADGQPVGSRTLSRASGLELSPATIRNVMADLEELGLIASPHTSAGRIPTARGYRLFVDTMLTARPLDMARSEPGLAAAQEQLQPDQPQRVITHAAQVLSNLSQFVGVVTAPRKAGVFHHIEFMRLGERRVLVILVSPDGDVQNRVIFTARDHSPAELVEASNFINAHYSGLSIEAVRERLKTEIDALRGEIALLMQAAVQFGSEAADGENEQVVVSGERNLLTMQDFSSDMGSLRKLFDLFEQKTQLMRLLDVSSRAEGVRIYIGGESQIVPFEELSVVSAPYEVDGKIVGTLGVIGPTRMAYDRMIQIVDITSRLVTQALSQK</sequence>
<dbReference type="EMBL" id="CP000555">
    <property type="protein sequence ID" value="ABM96286.1"/>
    <property type="molecule type" value="Genomic_DNA"/>
</dbReference>
<dbReference type="RefSeq" id="WP_011830907.1">
    <property type="nucleotide sequence ID" value="NC_008825.1"/>
</dbReference>
<dbReference type="SMR" id="A2SL47"/>
<dbReference type="STRING" id="420662.Mpe_A3333"/>
<dbReference type="KEGG" id="mpt:Mpe_A3333"/>
<dbReference type="eggNOG" id="COG1420">
    <property type="taxonomic scope" value="Bacteria"/>
</dbReference>
<dbReference type="HOGENOM" id="CLU_050019_0_0_4"/>
<dbReference type="Proteomes" id="UP000000366">
    <property type="component" value="Chromosome"/>
</dbReference>
<dbReference type="GO" id="GO:0003677">
    <property type="term" value="F:DNA binding"/>
    <property type="evidence" value="ECO:0007669"/>
    <property type="project" value="InterPro"/>
</dbReference>
<dbReference type="GO" id="GO:0045892">
    <property type="term" value="P:negative regulation of DNA-templated transcription"/>
    <property type="evidence" value="ECO:0007669"/>
    <property type="project" value="UniProtKB-UniRule"/>
</dbReference>
<dbReference type="Gene3D" id="3.30.450.40">
    <property type="match status" value="1"/>
</dbReference>
<dbReference type="Gene3D" id="3.30.390.60">
    <property type="entry name" value="Heat-inducible transcription repressor hrca homolog, domain 3"/>
    <property type="match status" value="1"/>
</dbReference>
<dbReference type="Gene3D" id="1.10.10.10">
    <property type="entry name" value="Winged helix-like DNA-binding domain superfamily/Winged helix DNA-binding domain"/>
    <property type="match status" value="1"/>
</dbReference>
<dbReference type="HAMAP" id="MF_00081">
    <property type="entry name" value="HrcA"/>
    <property type="match status" value="1"/>
</dbReference>
<dbReference type="InterPro" id="IPR029016">
    <property type="entry name" value="GAF-like_dom_sf"/>
</dbReference>
<dbReference type="InterPro" id="IPR002571">
    <property type="entry name" value="HrcA"/>
</dbReference>
<dbReference type="InterPro" id="IPR021153">
    <property type="entry name" value="HrcA_C"/>
</dbReference>
<dbReference type="InterPro" id="IPR036388">
    <property type="entry name" value="WH-like_DNA-bd_sf"/>
</dbReference>
<dbReference type="InterPro" id="IPR036390">
    <property type="entry name" value="WH_DNA-bd_sf"/>
</dbReference>
<dbReference type="InterPro" id="IPR005104">
    <property type="entry name" value="WHTH_HrcA_DNA-bd"/>
</dbReference>
<dbReference type="InterPro" id="IPR023120">
    <property type="entry name" value="WHTH_transcript_rep_HrcA_IDD"/>
</dbReference>
<dbReference type="NCBIfam" id="TIGR00331">
    <property type="entry name" value="hrcA"/>
    <property type="match status" value="1"/>
</dbReference>
<dbReference type="PANTHER" id="PTHR34824">
    <property type="entry name" value="HEAT-INDUCIBLE TRANSCRIPTION REPRESSOR HRCA"/>
    <property type="match status" value="1"/>
</dbReference>
<dbReference type="PANTHER" id="PTHR34824:SF1">
    <property type="entry name" value="HEAT-INDUCIBLE TRANSCRIPTION REPRESSOR HRCA"/>
    <property type="match status" value="1"/>
</dbReference>
<dbReference type="Pfam" id="PF01628">
    <property type="entry name" value="HrcA"/>
    <property type="match status" value="1"/>
</dbReference>
<dbReference type="Pfam" id="PF03444">
    <property type="entry name" value="HrcA_DNA-bdg"/>
    <property type="match status" value="1"/>
</dbReference>
<dbReference type="PIRSF" id="PIRSF005485">
    <property type="entry name" value="HrcA"/>
    <property type="match status" value="1"/>
</dbReference>
<dbReference type="SUPFAM" id="SSF55781">
    <property type="entry name" value="GAF domain-like"/>
    <property type="match status" value="1"/>
</dbReference>
<dbReference type="SUPFAM" id="SSF46785">
    <property type="entry name" value="Winged helix' DNA-binding domain"/>
    <property type="match status" value="1"/>
</dbReference>
<organism>
    <name type="scientific">Methylibium petroleiphilum (strain ATCC BAA-1232 / LMG 22953 / PM1)</name>
    <dbReference type="NCBI Taxonomy" id="420662"/>
    <lineage>
        <taxon>Bacteria</taxon>
        <taxon>Pseudomonadati</taxon>
        <taxon>Pseudomonadota</taxon>
        <taxon>Betaproteobacteria</taxon>
        <taxon>Burkholderiales</taxon>
        <taxon>Sphaerotilaceae</taxon>
        <taxon>Methylibium</taxon>
    </lineage>
</organism>
<name>HRCA_METPP</name>
<proteinExistence type="inferred from homology"/>
<reference key="1">
    <citation type="journal article" date="2007" name="J. Bacteriol.">
        <title>Whole-genome analysis of the methyl tert-butyl ether-degrading beta-proteobacterium Methylibium petroleiphilum PM1.</title>
        <authorList>
            <person name="Kane S.R."/>
            <person name="Chakicherla A.Y."/>
            <person name="Chain P.S.G."/>
            <person name="Schmidt R."/>
            <person name="Shin M.W."/>
            <person name="Legler T.C."/>
            <person name="Scow K.M."/>
            <person name="Larimer F.W."/>
            <person name="Lucas S.M."/>
            <person name="Richardson P.M."/>
            <person name="Hristova K.R."/>
        </authorList>
    </citation>
    <scope>NUCLEOTIDE SEQUENCE [LARGE SCALE GENOMIC DNA]</scope>
    <source>
        <strain>ATCC BAA-1232 / LMG 22953 / PM1</strain>
    </source>
</reference>